<protein>
    <recommendedName>
        <fullName>Histone H2A.Z</fullName>
    </recommendedName>
</protein>
<comment type="function">
    <text evidence="1">Variant histone H2A which can replace H2A in some nucleosomes. Nucleosomes wrap and compact DNA into chromatin, limiting DNA accessibility to the cellular machineries which require DNA as a template. Histones thereby play a central role in transcription regulation, DNA repair, DNA replication and chromosomal stability. DNA accessibility is regulated via a complex set of post-translational modifications of histones, also called histone code, and nucleosome remodeling. This variant is enriched at promoters, it may keep them in a repressed state until the appropriate activation signal is received. Near telomeres, it may counteract gene silencing caused by the spread of heterochromatin proteins. Required for the RNA polymerase II and SPT15/TBP recruitment to the target genes. Involved in chromosome stability (By similarity).</text>
</comment>
<comment type="subunit">
    <text evidence="1">The nucleosome is a histone octamer containing two molecules each of H2A, H2B, H3 and H4 assembled in one H3-H4 heterotetramer and two H2A-H2B heterodimers. The octamer wraps approximately 147 bp of DNA. H2A or its variant H2A.Z forms a heterodimer with H2B. H2A.Z associates with the VPS72/SWC2 subunit of the SWR1 chromatin remodeling complex. Also interacts with RBP1/DNA-directed RNA polymerase II largest subunit (By similarity).</text>
</comment>
<comment type="subcellular location">
    <subcellularLocation>
        <location evidence="1">Nucleus</location>
    </subcellularLocation>
    <subcellularLocation>
        <location evidence="1">Chromosome</location>
    </subcellularLocation>
</comment>
<comment type="PTM">
    <text evidence="1">Acetylated once deposited into chromatin.</text>
</comment>
<comment type="similarity">
    <text evidence="3">Belongs to the histone H2A family.</text>
</comment>
<evidence type="ECO:0000250" key="1"/>
<evidence type="ECO:0000256" key="2">
    <source>
        <dbReference type="SAM" id="MobiDB-lite"/>
    </source>
</evidence>
<evidence type="ECO:0000305" key="3"/>
<name>H2AZ_DEBHA</name>
<accession>Q6BQE9</accession>
<keyword id="KW-0007">Acetylation</keyword>
<keyword id="KW-0010">Activator</keyword>
<keyword id="KW-0156">Chromatin regulator</keyword>
<keyword id="KW-0158">Chromosome</keyword>
<keyword id="KW-0238">DNA-binding</keyword>
<keyword id="KW-0544">Nucleosome core</keyword>
<keyword id="KW-0539">Nucleus</keyword>
<keyword id="KW-1185">Reference proteome</keyword>
<keyword id="KW-0804">Transcription</keyword>
<keyword id="KW-0805">Transcription regulation</keyword>
<organism>
    <name type="scientific">Debaryomyces hansenii (strain ATCC 36239 / CBS 767 / BCRC 21394 / JCM 1990 / NBRC 0083 / IGC 2968)</name>
    <name type="common">Yeast</name>
    <name type="synonym">Torulaspora hansenii</name>
    <dbReference type="NCBI Taxonomy" id="284592"/>
    <lineage>
        <taxon>Eukaryota</taxon>
        <taxon>Fungi</taxon>
        <taxon>Dikarya</taxon>
        <taxon>Ascomycota</taxon>
        <taxon>Saccharomycotina</taxon>
        <taxon>Pichiomycetes</taxon>
        <taxon>Debaryomycetaceae</taxon>
        <taxon>Debaryomyces</taxon>
    </lineage>
</organism>
<proteinExistence type="inferred from homology"/>
<gene>
    <name type="primary">HTZ1</name>
    <name type="ordered locus">DEHA2E05720g</name>
</gene>
<sequence length="132" mass="14370">MSGKGKVHGGKGKSSETAKSTTSHSARAGLQFPVGRIKRYLKRTAQNKIRVGSKSAIYLTAVLEYLTAEVLELAGNAAKDLKVKRITPRHLQLAIRGDEELDNLIKATIAFGGVLPHINKALLLKVEKKKQK</sequence>
<feature type="initiator methionine" description="Removed" evidence="1">
    <location>
        <position position="1"/>
    </location>
</feature>
<feature type="chain" id="PRO_0000055332" description="Histone H2A.Z">
    <location>
        <begin position="2"/>
        <end position="132"/>
    </location>
</feature>
<feature type="region of interest" description="Disordered" evidence="2">
    <location>
        <begin position="1"/>
        <end position="27"/>
    </location>
</feature>
<feature type="compositionally biased region" description="Basic residues" evidence="2">
    <location>
        <begin position="1"/>
        <end position="11"/>
    </location>
</feature>
<feature type="modified residue" description="N-acetylserine" evidence="1">
    <location>
        <position position="2"/>
    </location>
</feature>
<feature type="modified residue" description="N6-acetyllysine" evidence="1">
    <location>
        <position position="4"/>
    </location>
</feature>
<feature type="modified residue" description="N6-acetyllysine" evidence="1">
    <location>
        <position position="11"/>
    </location>
</feature>
<feature type="modified residue" description="N6-acetyllysine" evidence="1">
    <location>
        <position position="13"/>
    </location>
</feature>
<dbReference type="EMBL" id="CR382137">
    <property type="protein sequence ID" value="CAG87798.1"/>
    <property type="molecule type" value="Genomic_DNA"/>
</dbReference>
<dbReference type="RefSeq" id="XP_459571.1">
    <property type="nucleotide sequence ID" value="XM_459571.1"/>
</dbReference>
<dbReference type="SMR" id="Q6BQE9"/>
<dbReference type="FunCoup" id="Q6BQE9">
    <property type="interactions" value="1176"/>
</dbReference>
<dbReference type="STRING" id="284592.Q6BQE9"/>
<dbReference type="GeneID" id="2901889"/>
<dbReference type="KEGG" id="dha:DEHA2E05720g"/>
<dbReference type="VEuPathDB" id="FungiDB:DEHA2E05720g"/>
<dbReference type="eggNOG" id="KOG1757">
    <property type="taxonomic scope" value="Eukaryota"/>
</dbReference>
<dbReference type="HOGENOM" id="CLU_062828_2_1_1"/>
<dbReference type="InParanoid" id="Q6BQE9"/>
<dbReference type="OMA" id="MNKKGAP"/>
<dbReference type="OrthoDB" id="9421954at2759"/>
<dbReference type="Proteomes" id="UP000000599">
    <property type="component" value="Chromosome E"/>
</dbReference>
<dbReference type="GO" id="GO:0000791">
    <property type="term" value="C:euchromatin"/>
    <property type="evidence" value="ECO:0007669"/>
    <property type="project" value="EnsemblFungi"/>
</dbReference>
<dbReference type="GO" id="GO:0000786">
    <property type="term" value="C:nucleosome"/>
    <property type="evidence" value="ECO:0007669"/>
    <property type="project" value="UniProtKB-KW"/>
</dbReference>
<dbReference type="GO" id="GO:0005634">
    <property type="term" value="C:nucleus"/>
    <property type="evidence" value="ECO:0007669"/>
    <property type="project" value="UniProtKB-SubCell"/>
</dbReference>
<dbReference type="GO" id="GO:0031490">
    <property type="term" value="F:chromatin DNA binding"/>
    <property type="evidence" value="ECO:0007669"/>
    <property type="project" value="EnsemblFungi"/>
</dbReference>
<dbReference type="GO" id="GO:0042802">
    <property type="term" value="F:identical protein binding"/>
    <property type="evidence" value="ECO:0007669"/>
    <property type="project" value="EnsemblFungi"/>
</dbReference>
<dbReference type="GO" id="GO:0046982">
    <property type="term" value="F:protein heterodimerization activity"/>
    <property type="evidence" value="ECO:0007669"/>
    <property type="project" value="InterPro"/>
</dbReference>
<dbReference type="GO" id="GO:0000978">
    <property type="term" value="F:RNA polymerase II cis-regulatory region sequence-specific DNA binding"/>
    <property type="evidence" value="ECO:0007669"/>
    <property type="project" value="EnsemblFungi"/>
</dbReference>
<dbReference type="GO" id="GO:0030527">
    <property type="term" value="F:structural constituent of chromatin"/>
    <property type="evidence" value="ECO:0007669"/>
    <property type="project" value="InterPro"/>
</dbReference>
<dbReference type="GO" id="GO:0140898">
    <property type="term" value="P:CENP-A eviction from euchromatin"/>
    <property type="evidence" value="ECO:0007669"/>
    <property type="project" value="EnsemblFungi"/>
</dbReference>
<dbReference type="GO" id="GO:0070481">
    <property type="term" value="P:nuclear-transcribed mRNA catabolic process, non-stop decay"/>
    <property type="evidence" value="ECO:0007669"/>
    <property type="project" value="EnsemblFungi"/>
</dbReference>
<dbReference type="GO" id="GO:0006357">
    <property type="term" value="P:regulation of transcription by RNA polymerase II"/>
    <property type="evidence" value="ECO:0007669"/>
    <property type="project" value="EnsemblFungi"/>
</dbReference>
<dbReference type="GO" id="GO:0030466">
    <property type="term" value="P:silent mating-type cassette heterochromatin formation"/>
    <property type="evidence" value="ECO:0007669"/>
    <property type="project" value="EnsemblFungi"/>
</dbReference>
<dbReference type="GO" id="GO:0006368">
    <property type="term" value="P:transcription elongation by RNA polymerase II"/>
    <property type="evidence" value="ECO:0007669"/>
    <property type="project" value="EnsemblFungi"/>
</dbReference>
<dbReference type="CDD" id="cd00074">
    <property type="entry name" value="HFD_H2A"/>
    <property type="match status" value="1"/>
</dbReference>
<dbReference type="FunFam" id="1.10.20.10:FF:000021">
    <property type="entry name" value="Histone H2A"/>
    <property type="match status" value="1"/>
</dbReference>
<dbReference type="Gene3D" id="1.10.20.10">
    <property type="entry name" value="Histone, subunit A"/>
    <property type="match status" value="1"/>
</dbReference>
<dbReference type="InterPro" id="IPR009072">
    <property type="entry name" value="Histone-fold"/>
</dbReference>
<dbReference type="InterPro" id="IPR002119">
    <property type="entry name" value="Histone_H2A"/>
</dbReference>
<dbReference type="InterPro" id="IPR007125">
    <property type="entry name" value="Histone_H2A/H2B/H3"/>
</dbReference>
<dbReference type="InterPro" id="IPR032454">
    <property type="entry name" value="Histone_H2A_C"/>
</dbReference>
<dbReference type="InterPro" id="IPR032458">
    <property type="entry name" value="Histone_H2A_CS"/>
</dbReference>
<dbReference type="PANTHER" id="PTHR23430">
    <property type="entry name" value="HISTONE H2A"/>
    <property type="match status" value="1"/>
</dbReference>
<dbReference type="Pfam" id="PF00125">
    <property type="entry name" value="Histone"/>
    <property type="match status" value="1"/>
</dbReference>
<dbReference type="Pfam" id="PF16211">
    <property type="entry name" value="Histone_H2A_C"/>
    <property type="match status" value="1"/>
</dbReference>
<dbReference type="PRINTS" id="PR00620">
    <property type="entry name" value="HISTONEH2A"/>
</dbReference>
<dbReference type="SMART" id="SM00414">
    <property type="entry name" value="H2A"/>
    <property type="match status" value="1"/>
</dbReference>
<dbReference type="SUPFAM" id="SSF47113">
    <property type="entry name" value="Histone-fold"/>
    <property type="match status" value="1"/>
</dbReference>
<dbReference type="PROSITE" id="PS00046">
    <property type="entry name" value="HISTONE_H2A"/>
    <property type="match status" value="1"/>
</dbReference>
<reference key="1">
    <citation type="journal article" date="2004" name="Nature">
        <title>Genome evolution in yeasts.</title>
        <authorList>
            <person name="Dujon B."/>
            <person name="Sherman D."/>
            <person name="Fischer G."/>
            <person name="Durrens P."/>
            <person name="Casaregola S."/>
            <person name="Lafontaine I."/>
            <person name="de Montigny J."/>
            <person name="Marck C."/>
            <person name="Neuveglise C."/>
            <person name="Talla E."/>
            <person name="Goffard N."/>
            <person name="Frangeul L."/>
            <person name="Aigle M."/>
            <person name="Anthouard V."/>
            <person name="Babour A."/>
            <person name="Barbe V."/>
            <person name="Barnay S."/>
            <person name="Blanchin S."/>
            <person name="Beckerich J.-M."/>
            <person name="Beyne E."/>
            <person name="Bleykasten C."/>
            <person name="Boisrame A."/>
            <person name="Boyer J."/>
            <person name="Cattolico L."/>
            <person name="Confanioleri F."/>
            <person name="de Daruvar A."/>
            <person name="Despons L."/>
            <person name="Fabre E."/>
            <person name="Fairhead C."/>
            <person name="Ferry-Dumazet H."/>
            <person name="Groppi A."/>
            <person name="Hantraye F."/>
            <person name="Hennequin C."/>
            <person name="Jauniaux N."/>
            <person name="Joyet P."/>
            <person name="Kachouri R."/>
            <person name="Kerrest A."/>
            <person name="Koszul R."/>
            <person name="Lemaire M."/>
            <person name="Lesur I."/>
            <person name="Ma L."/>
            <person name="Muller H."/>
            <person name="Nicaud J.-M."/>
            <person name="Nikolski M."/>
            <person name="Oztas S."/>
            <person name="Ozier-Kalogeropoulos O."/>
            <person name="Pellenz S."/>
            <person name="Potier S."/>
            <person name="Richard G.-F."/>
            <person name="Straub M.-L."/>
            <person name="Suleau A."/>
            <person name="Swennen D."/>
            <person name="Tekaia F."/>
            <person name="Wesolowski-Louvel M."/>
            <person name="Westhof E."/>
            <person name="Wirth B."/>
            <person name="Zeniou-Meyer M."/>
            <person name="Zivanovic Y."/>
            <person name="Bolotin-Fukuhara M."/>
            <person name="Thierry A."/>
            <person name="Bouchier C."/>
            <person name="Caudron B."/>
            <person name="Scarpelli C."/>
            <person name="Gaillardin C."/>
            <person name="Weissenbach J."/>
            <person name="Wincker P."/>
            <person name="Souciet J.-L."/>
        </authorList>
    </citation>
    <scope>NUCLEOTIDE SEQUENCE [LARGE SCALE GENOMIC DNA]</scope>
    <source>
        <strain>ATCC 36239 / CBS 767 / BCRC 21394 / JCM 1990 / NBRC 0083 / IGC 2968</strain>
    </source>
</reference>